<feature type="chain" id="PRO_0000380449" description="DNA ligase">
    <location>
        <begin position="1"/>
        <end position="776"/>
    </location>
</feature>
<feature type="domain" description="BRCT" evidence="1">
    <location>
        <begin position="693"/>
        <end position="776"/>
    </location>
</feature>
<feature type="active site" description="N6-AMP-lysine intermediate" evidence="1">
    <location>
        <position position="114"/>
    </location>
</feature>
<feature type="binding site" evidence="1">
    <location>
        <begin position="31"/>
        <end position="35"/>
    </location>
    <ligand>
        <name>NAD(+)</name>
        <dbReference type="ChEBI" id="CHEBI:57540"/>
    </ligand>
</feature>
<feature type="binding site" evidence="1">
    <location>
        <begin position="80"/>
        <end position="81"/>
    </location>
    <ligand>
        <name>NAD(+)</name>
        <dbReference type="ChEBI" id="CHEBI:57540"/>
    </ligand>
</feature>
<feature type="binding site" evidence="1">
    <location>
        <position position="112"/>
    </location>
    <ligand>
        <name>NAD(+)</name>
        <dbReference type="ChEBI" id="CHEBI:57540"/>
    </ligand>
</feature>
<feature type="binding site" evidence="1">
    <location>
        <position position="135"/>
    </location>
    <ligand>
        <name>NAD(+)</name>
        <dbReference type="ChEBI" id="CHEBI:57540"/>
    </ligand>
</feature>
<feature type="binding site" evidence="1">
    <location>
        <position position="172"/>
    </location>
    <ligand>
        <name>NAD(+)</name>
        <dbReference type="ChEBI" id="CHEBI:57540"/>
    </ligand>
</feature>
<feature type="binding site" evidence="1">
    <location>
        <position position="288"/>
    </location>
    <ligand>
        <name>NAD(+)</name>
        <dbReference type="ChEBI" id="CHEBI:57540"/>
    </ligand>
</feature>
<feature type="binding site" evidence="1">
    <location>
        <position position="312"/>
    </location>
    <ligand>
        <name>NAD(+)</name>
        <dbReference type="ChEBI" id="CHEBI:57540"/>
    </ligand>
</feature>
<feature type="binding site" evidence="1">
    <location>
        <position position="406"/>
    </location>
    <ligand>
        <name>Zn(2+)</name>
        <dbReference type="ChEBI" id="CHEBI:29105"/>
    </ligand>
</feature>
<feature type="binding site" evidence="1">
    <location>
        <position position="409"/>
    </location>
    <ligand>
        <name>Zn(2+)</name>
        <dbReference type="ChEBI" id="CHEBI:29105"/>
    </ligand>
</feature>
<feature type="binding site" evidence="1">
    <location>
        <position position="436"/>
    </location>
    <ligand>
        <name>Zn(2+)</name>
        <dbReference type="ChEBI" id="CHEBI:29105"/>
    </ligand>
</feature>
<feature type="binding site" evidence="1">
    <location>
        <position position="442"/>
    </location>
    <ligand>
        <name>Zn(2+)</name>
        <dbReference type="ChEBI" id="CHEBI:29105"/>
    </ligand>
</feature>
<dbReference type="EC" id="6.5.1.2" evidence="1"/>
<dbReference type="EMBL" id="CP000949">
    <property type="protein sequence ID" value="ACA74082.1"/>
    <property type="molecule type" value="Genomic_DNA"/>
</dbReference>
<dbReference type="SMR" id="B1JC06"/>
<dbReference type="STRING" id="390235.PputW619_3600"/>
<dbReference type="KEGG" id="ppw:PputW619_3600"/>
<dbReference type="eggNOG" id="COG0272">
    <property type="taxonomic scope" value="Bacteria"/>
</dbReference>
<dbReference type="HOGENOM" id="CLU_007764_2_1_6"/>
<dbReference type="OrthoDB" id="9759736at2"/>
<dbReference type="GO" id="GO:0005829">
    <property type="term" value="C:cytosol"/>
    <property type="evidence" value="ECO:0007669"/>
    <property type="project" value="TreeGrafter"/>
</dbReference>
<dbReference type="GO" id="GO:0003677">
    <property type="term" value="F:DNA binding"/>
    <property type="evidence" value="ECO:0007669"/>
    <property type="project" value="InterPro"/>
</dbReference>
<dbReference type="GO" id="GO:0003911">
    <property type="term" value="F:DNA ligase (NAD+) activity"/>
    <property type="evidence" value="ECO:0007669"/>
    <property type="project" value="UniProtKB-UniRule"/>
</dbReference>
<dbReference type="GO" id="GO:0046872">
    <property type="term" value="F:metal ion binding"/>
    <property type="evidence" value="ECO:0007669"/>
    <property type="project" value="UniProtKB-KW"/>
</dbReference>
<dbReference type="GO" id="GO:0006281">
    <property type="term" value="P:DNA repair"/>
    <property type="evidence" value="ECO:0007669"/>
    <property type="project" value="UniProtKB-KW"/>
</dbReference>
<dbReference type="GO" id="GO:0006260">
    <property type="term" value="P:DNA replication"/>
    <property type="evidence" value="ECO:0007669"/>
    <property type="project" value="UniProtKB-KW"/>
</dbReference>
<dbReference type="CDD" id="cd17748">
    <property type="entry name" value="BRCT_DNA_ligase_like"/>
    <property type="match status" value="1"/>
</dbReference>
<dbReference type="CDD" id="cd00114">
    <property type="entry name" value="LIGANc"/>
    <property type="match status" value="1"/>
</dbReference>
<dbReference type="FunFam" id="1.10.150.20:FF:000006">
    <property type="entry name" value="DNA ligase"/>
    <property type="match status" value="1"/>
</dbReference>
<dbReference type="FunFam" id="1.10.150.20:FF:000007">
    <property type="entry name" value="DNA ligase"/>
    <property type="match status" value="1"/>
</dbReference>
<dbReference type="FunFam" id="1.10.287.610:FF:000002">
    <property type="entry name" value="DNA ligase"/>
    <property type="match status" value="1"/>
</dbReference>
<dbReference type="FunFam" id="2.40.50.140:FF:000012">
    <property type="entry name" value="DNA ligase"/>
    <property type="match status" value="1"/>
</dbReference>
<dbReference type="FunFam" id="3.30.470.30:FF:000001">
    <property type="entry name" value="DNA ligase"/>
    <property type="match status" value="1"/>
</dbReference>
<dbReference type="Gene3D" id="6.20.10.30">
    <property type="match status" value="1"/>
</dbReference>
<dbReference type="Gene3D" id="1.10.150.20">
    <property type="entry name" value="5' to 3' exonuclease, C-terminal subdomain"/>
    <property type="match status" value="3"/>
</dbReference>
<dbReference type="Gene3D" id="3.40.50.10190">
    <property type="entry name" value="BRCT domain"/>
    <property type="match status" value="1"/>
</dbReference>
<dbReference type="Gene3D" id="3.30.470.30">
    <property type="entry name" value="DNA ligase/mRNA capping enzyme"/>
    <property type="match status" value="1"/>
</dbReference>
<dbReference type="Gene3D" id="1.10.287.610">
    <property type="entry name" value="Helix hairpin bin"/>
    <property type="match status" value="1"/>
</dbReference>
<dbReference type="Gene3D" id="2.40.50.140">
    <property type="entry name" value="Nucleic acid-binding proteins"/>
    <property type="match status" value="1"/>
</dbReference>
<dbReference type="HAMAP" id="MF_01588">
    <property type="entry name" value="DNA_ligase_A"/>
    <property type="match status" value="1"/>
</dbReference>
<dbReference type="InterPro" id="IPR001357">
    <property type="entry name" value="BRCT_dom"/>
</dbReference>
<dbReference type="InterPro" id="IPR036420">
    <property type="entry name" value="BRCT_dom_sf"/>
</dbReference>
<dbReference type="InterPro" id="IPR041663">
    <property type="entry name" value="DisA/LigA_HHH"/>
</dbReference>
<dbReference type="InterPro" id="IPR001679">
    <property type="entry name" value="DNA_ligase"/>
</dbReference>
<dbReference type="InterPro" id="IPR018239">
    <property type="entry name" value="DNA_ligase_AS"/>
</dbReference>
<dbReference type="InterPro" id="IPR033136">
    <property type="entry name" value="DNA_ligase_CS"/>
</dbReference>
<dbReference type="InterPro" id="IPR013839">
    <property type="entry name" value="DNAligase_adenylation"/>
</dbReference>
<dbReference type="InterPro" id="IPR013840">
    <property type="entry name" value="DNAligase_N"/>
</dbReference>
<dbReference type="InterPro" id="IPR003583">
    <property type="entry name" value="Hlx-hairpin-Hlx_DNA-bd_motif"/>
</dbReference>
<dbReference type="InterPro" id="IPR012340">
    <property type="entry name" value="NA-bd_OB-fold"/>
</dbReference>
<dbReference type="InterPro" id="IPR004150">
    <property type="entry name" value="NAD_DNA_ligase_OB"/>
</dbReference>
<dbReference type="InterPro" id="IPR010994">
    <property type="entry name" value="RuvA_2-like"/>
</dbReference>
<dbReference type="NCBIfam" id="TIGR00575">
    <property type="entry name" value="dnlj"/>
    <property type="match status" value="1"/>
</dbReference>
<dbReference type="NCBIfam" id="NF005932">
    <property type="entry name" value="PRK07956.1"/>
    <property type="match status" value="1"/>
</dbReference>
<dbReference type="PANTHER" id="PTHR23389">
    <property type="entry name" value="CHROMOSOME TRANSMISSION FIDELITY FACTOR 18"/>
    <property type="match status" value="1"/>
</dbReference>
<dbReference type="PANTHER" id="PTHR23389:SF9">
    <property type="entry name" value="DNA LIGASE"/>
    <property type="match status" value="1"/>
</dbReference>
<dbReference type="Pfam" id="PF00533">
    <property type="entry name" value="BRCT"/>
    <property type="match status" value="1"/>
</dbReference>
<dbReference type="Pfam" id="PF01653">
    <property type="entry name" value="DNA_ligase_aden"/>
    <property type="match status" value="1"/>
</dbReference>
<dbReference type="Pfam" id="PF03120">
    <property type="entry name" value="DNA_ligase_OB"/>
    <property type="match status" value="1"/>
</dbReference>
<dbReference type="Pfam" id="PF12826">
    <property type="entry name" value="HHH_2"/>
    <property type="match status" value="1"/>
</dbReference>
<dbReference type="Pfam" id="PF22745">
    <property type="entry name" value="Nlig-Ia"/>
    <property type="match status" value="1"/>
</dbReference>
<dbReference type="PIRSF" id="PIRSF001604">
    <property type="entry name" value="LigA"/>
    <property type="match status" value="1"/>
</dbReference>
<dbReference type="SMART" id="SM00292">
    <property type="entry name" value="BRCT"/>
    <property type="match status" value="1"/>
</dbReference>
<dbReference type="SMART" id="SM00278">
    <property type="entry name" value="HhH1"/>
    <property type="match status" value="3"/>
</dbReference>
<dbReference type="SMART" id="SM00532">
    <property type="entry name" value="LIGANc"/>
    <property type="match status" value="1"/>
</dbReference>
<dbReference type="SUPFAM" id="SSF52113">
    <property type="entry name" value="BRCT domain"/>
    <property type="match status" value="1"/>
</dbReference>
<dbReference type="SUPFAM" id="SSF56091">
    <property type="entry name" value="DNA ligase/mRNA capping enzyme, catalytic domain"/>
    <property type="match status" value="1"/>
</dbReference>
<dbReference type="SUPFAM" id="SSF50249">
    <property type="entry name" value="Nucleic acid-binding proteins"/>
    <property type="match status" value="1"/>
</dbReference>
<dbReference type="SUPFAM" id="SSF47781">
    <property type="entry name" value="RuvA domain 2-like"/>
    <property type="match status" value="2"/>
</dbReference>
<dbReference type="PROSITE" id="PS50172">
    <property type="entry name" value="BRCT"/>
    <property type="match status" value="1"/>
</dbReference>
<dbReference type="PROSITE" id="PS01055">
    <property type="entry name" value="DNA_LIGASE_N1"/>
    <property type="match status" value="1"/>
</dbReference>
<dbReference type="PROSITE" id="PS01056">
    <property type="entry name" value="DNA_LIGASE_N2"/>
    <property type="match status" value="1"/>
</dbReference>
<name>DNLJ_PSEPW</name>
<organism>
    <name type="scientific">Pseudomonas putida (strain W619)</name>
    <dbReference type="NCBI Taxonomy" id="390235"/>
    <lineage>
        <taxon>Bacteria</taxon>
        <taxon>Pseudomonadati</taxon>
        <taxon>Pseudomonadota</taxon>
        <taxon>Gammaproteobacteria</taxon>
        <taxon>Pseudomonadales</taxon>
        <taxon>Pseudomonadaceae</taxon>
        <taxon>Pseudomonas</taxon>
    </lineage>
</organism>
<sequence>MNAESRIHALRAELDQHNYRYYVLDEPSVPDAEYDRLFNELKALEAEHPHLVTPDSPTQRVGGAALAAFSQVRHEVPMLSLGNAFEEADLREFGRRVVDGLDQPGAVDYSCEPKLDGLAVSLLYRDGQLVQGATRGDGTTGEDISANVRTVRNIPLKLQGKGWPAVLEVRGEVFMSKAGFDRLNAAQAEAGGKTFANPRNAAAGSLRQLDSKITASRPLEFCCYGVGQVSASIGESHIGILEQLKAWGLPISRELRHAAGIEECLAYYRDIGERRNSLPYEIDGVVFKVNSLASQRELGFRAREPRWAIAHKFPAMEELTEVLDVEFQVGRTGAVTPVARLKPVKVAGVTVSNATLHNMDEIARLGLRIGDTVIIRRAGDVIPQVMQVVLERRPEDARPVQVPSACPVCGSQVERTQLVKRSKGKETTSEGAVYRCVGRLACGAQLKQAIIHYVSRRAMDIDGLGEKSVEQLVDEGLIGSPADLYKLQFDQIVGLEGFAEVSSKKLLDAIEASKRPSLARFIYALGIPDVGEETAKVLARSLGSLARVQQALPQVLTYLPDIGLEVAYEIHNFFEDEHNCKVIEQLLGCGMQLQDEGELAAEFAASTTLAGMIAKLDIASVGPTGAEKLVAKLDSLDKIIAADGIDLRQALAAKQAEAVREFFKDEANQKLARDIEAQLLAFGMHWNSEKKVAEGLPLAGQTWVLTGTLERMSRDIAKEKLESLGAKVAGSVSGKTHCVVAGPGAGSKLAKASELGVKVLDEDAFVVFLDEQGIAI</sequence>
<gene>
    <name evidence="1" type="primary">ligA</name>
    <name type="ordered locus">PputW619_3600</name>
</gene>
<comment type="function">
    <text evidence="1">DNA ligase that catalyzes the formation of phosphodiester linkages between 5'-phosphoryl and 3'-hydroxyl groups in double-stranded DNA using NAD as a coenzyme and as the energy source for the reaction. It is essential for DNA replication and repair of damaged DNA.</text>
</comment>
<comment type="catalytic activity">
    <reaction evidence="1">
        <text>NAD(+) + (deoxyribonucleotide)n-3'-hydroxyl + 5'-phospho-(deoxyribonucleotide)m = (deoxyribonucleotide)n+m + AMP + beta-nicotinamide D-nucleotide.</text>
        <dbReference type="EC" id="6.5.1.2"/>
    </reaction>
</comment>
<comment type="cofactor">
    <cofactor evidence="1">
        <name>Mg(2+)</name>
        <dbReference type="ChEBI" id="CHEBI:18420"/>
    </cofactor>
    <cofactor evidence="1">
        <name>Mn(2+)</name>
        <dbReference type="ChEBI" id="CHEBI:29035"/>
    </cofactor>
</comment>
<comment type="similarity">
    <text evidence="1">Belongs to the NAD-dependent DNA ligase family. LigA subfamily.</text>
</comment>
<proteinExistence type="inferred from homology"/>
<evidence type="ECO:0000255" key="1">
    <source>
        <dbReference type="HAMAP-Rule" id="MF_01588"/>
    </source>
</evidence>
<protein>
    <recommendedName>
        <fullName evidence="1">DNA ligase</fullName>
        <ecNumber evidence="1">6.5.1.2</ecNumber>
    </recommendedName>
    <alternativeName>
        <fullName evidence="1">Polydeoxyribonucleotide synthase [NAD(+)]</fullName>
    </alternativeName>
</protein>
<accession>B1JC06</accession>
<keyword id="KW-0227">DNA damage</keyword>
<keyword id="KW-0234">DNA repair</keyword>
<keyword id="KW-0235">DNA replication</keyword>
<keyword id="KW-0436">Ligase</keyword>
<keyword id="KW-0460">Magnesium</keyword>
<keyword id="KW-0464">Manganese</keyword>
<keyword id="KW-0479">Metal-binding</keyword>
<keyword id="KW-0520">NAD</keyword>
<keyword id="KW-0862">Zinc</keyword>
<reference key="1">
    <citation type="submission" date="2008-02" db="EMBL/GenBank/DDBJ databases">
        <title>Complete sequence of Pseudomonas putida W619.</title>
        <authorList>
            <person name="Copeland A."/>
            <person name="Lucas S."/>
            <person name="Lapidus A."/>
            <person name="Barry K."/>
            <person name="Detter J.C."/>
            <person name="Glavina del Rio T."/>
            <person name="Dalin E."/>
            <person name="Tice H."/>
            <person name="Pitluck S."/>
            <person name="Chain P."/>
            <person name="Malfatti S."/>
            <person name="Shin M."/>
            <person name="Vergez L."/>
            <person name="Schmutz J."/>
            <person name="Larimer F."/>
            <person name="Land M."/>
            <person name="Hauser L."/>
            <person name="Kyrpides N."/>
            <person name="Kim E."/>
            <person name="Taghavi S."/>
            <person name="Vangronsveld D."/>
            <person name="van der Lelie D."/>
            <person name="Richardson P."/>
        </authorList>
    </citation>
    <scope>NUCLEOTIDE SEQUENCE [LARGE SCALE GENOMIC DNA]</scope>
    <source>
        <strain>W619</strain>
    </source>
</reference>